<name>DCA17_MOUSE</name>
<sequence length="519" mass="58400">MGRTRKANVCRRLSRRALGFYARDAGVVQRTNLGILRALVCQESTKFKNVWTTHSKSPIAYERGRIYFDNYRCCVSSVASEPRKLYEMPKCSKSEKIEDALLWECPVGDILPDPSDYKSSLIALTAHNWLLRISATTGEVLEKIYLASYCKFRYLSWDTPQEVIAVKSAQNKGSAAARQAGTSPPVLLYLAVFRVLPFSLVGILEINKKVFENVTDATLSHGILIVMYSSGLVRLYSFQAIIEQFMQQKLDLGCACSQGGTTGTVGEAPFGIPCNVKITDSPPPLFEVSSLENAFQIGGHPWHYIITPNKKKQKGVFHICALKDNSLAKNGIQEMECCSLESDWIYFHPDASGRIIHVGPNQVKVLKLSEVENDSSQHQISEDFVIWAKREDRKENLITVTASGRVVKRNVSLLDDDPEQETFKIVDYEDELDLLSVVAVTQIDAEGKAHLDFHCNEYGTLLKSIPLVESWDVTYSHEVYFDRDLVLHIEQKPNRVFSCYVYQMVCDPGEEEEAVNRSG</sequence>
<keyword id="KW-0025">Alternative splicing</keyword>
<keyword id="KW-0472">Membrane</keyword>
<keyword id="KW-0539">Nucleus</keyword>
<keyword id="KW-1185">Reference proteome</keyword>
<keyword id="KW-0812">Transmembrane</keyword>
<keyword id="KW-1133">Transmembrane helix</keyword>
<keyword id="KW-0833">Ubl conjugation pathway</keyword>
<reference key="1">
    <citation type="journal article" date="2005" name="Science">
        <title>The transcriptional landscape of the mammalian genome.</title>
        <authorList>
            <person name="Carninci P."/>
            <person name="Kasukawa T."/>
            <person name="Katayama S."/>
            <person name="Gough J."/>
            <person name="Frith M.C."/>
            <person name="Maeda N."/>
            <person name="Oyama R."/>
            <person name="Ravasi T."/>
            <person name="Lenhard B."/>
            <person name="Wells C."/>
            <person name="Kodzius R."/>
            <person name="Shimokawa K."/>
            <person name="Bajic V.B."/>
            <person name="Brenner S.E."/>
            <person name="Batalov S."/>
            <person name="Forrest A.R."/>
            <person name="Zavolan M."/>
            <person name="Davis M.J."/>
            <person name="Wilming L.G."/>
            <person name="Aidinis V."/>
            <person name="Allen J.E."/>
            <person name="Ambesi-Impiombato A."/>
            <person name="Apweiler R."/>
            <person name="Aturaliya R.N."/>
            <person name="Bailey T.L."/>
            <person name="Bansal M."/>
            <person name="Baxter L."/>
            <person name="Beisel K.W."/>
            <person name="Bersano T."/>
            <person name="Bono H."/>
            <person name="Chalk A.M."/>
            <person name="Chiu K.P."/>
            <person name="Choudhary V."/>
            <person name="Christoffels A."/>
            <person name="Clutterbuck D.R."/>
            <person name="Crowe M.L."/>
            <person name="Dalla E."/>
            <person name="Dalrymple B.P."/>
            <person name="de Bono B."/>
            <person name="Della Gatta G."/>
            <person name="di Bernardo D."/>
            <person name="Down T."/>
            <person name="Engstrom P."/>
            <person name="Fagiolini M."/>
            <person name="Faulkner G."/>
            <person name="Fletcher C.F."/>
            <person name="Fukushima T."/>
            <person name="Furuno M."/>
            <person name="Futaki S."/>
            <person name="Gariboldi M."/>
            <person name="Georgii-Hemming P."/>
            <person name="Gingeras T.R."/>
            <person name="Gojobori T."/>
            <person name="Green R.E."/>
            <person name="Gustincich S."/>
            <person name="Harbers M."/>
            <person name="Hayashi Y."/>
            <person name="Hensch T.K."/>
            <person name="Hirokawa N."/>
            <person name="Hill D."/>
            <person name="Huminiecki L."/>
            <person name="Iacono M."/>
            <person name="Ikeo K."/>
            <person name="Iwama A."/>
            <person name="Ishikawa T."/>
            <person name="Jakt M."/>
            <person name="Kanapin A."/>
            <person name="Katoh M."/>
            <person name="Kawasawa Y."/>
            <person name="Kelso J."/>
            <person name="Kitamura H."/>
            <person name="Kitano H."/>
            <person name="Kollias G."/>
            <person name="Krishnan S.P."/>
            <person name="Kruger A."/>
            <person name="Kummerfeld S.K."/>
            <person name="Kurochkin I.V."/>
            <person name="Lareau L.F."/>
            <person name="Lazarevic D."/>
            <person name="Lipovich L."/>
            <person name="Liu J."/>
            <person name="Liuni S."/>
            <person name="McWilliam S."/>
            <person name="Madan Babu M."/>
            <person name="Madera M."/>
            <person name="Marchionni L."/>
            <person name="Matsuda H."/>
            <person name="Matsuzawa S."/>
            <person name="Miki H."/>
            <person name="Mignone F."/>
            <person name="Miyake S."/>
            <person name="Morris K."/>
            <person name="Mottagui-Tabar S."/>
            <person name="Mulder N."/>
            <person name="Nakano N."/>
            <person name="Nakauchi H."/>
            <person name="Ng P."/>
            <person name="Nilsson R."/>
            <person name="Nishiguchi S."/>
            <person name="Nishikawa S."/>
            <person name="Nori F."/>
            <person name="Ohara O."/>
            <person name="Okazaki Y."/>
            <person name="Orlando V."/>
            <person name="Pang K.C."/>
            <person name="Pavan W.J."/>
            <person name="Pavesi G."/>
            <person name="Pesole G."/>
            <person name="Petrovsky N."/>
            <person name="Piazza S."/>
            <person name="Reed J."/>
            <person name="Reid J.F."/>
            <person name="Ring B.Z."/>
            <person name="Ringwald M."/>
            <person name="Rost B."/>
            <person name="Ruan Y."/>
            <person name="Salzberg S.L."/>
            <person name="Sandelin A."/>
            <person name="Schneider C."/>
            <person name="Schoenbach C."/>
            <person name="Sekiguchi K."/>
            <person name="Semple C.A."/>
            <person name="Seno S."/>
            <person name="Sessa L."/>
            <person name="Sheng Y."/>
            <person name="Shibata Y."/>
            <person name="Shimada H."/>
            <person name="Shimada K."/>
            <person name="Silva D."/>
            <person name="Sinclair B."/>
            <person name="Sperling S."/>
            <person name="Stupka E."/>
            <person name="Sugiura K."/>
            <person name="Sultana R."/>
            <person name="Takenaka Y."/>
            <person name="Taki K."/>
            <person name="Tammoja K."/>
            <person name="Tan S.L."/>
            <person name="Tang S."/>
            <person name="Taylor M.S."/>
            <person name="Tegner J."/>
            <person name="Teichmann S.A."/>
            <person name="Ueda H.R."/>
            <person name="van Nimwegen E."/>
            <person name="Verardo R."/>
            <person name="Wei C.L."/>
            <person name="Yagi K."/>
            <person name="Yamanishi H."/>
            <person name="Zabarovsky E."/>
            <person name="Zhu S."/>
            <person name="Zimmer A."/>
            <person name="Hide W."/>
            <person name="Bult C."/>
            <person name="Grimmond S.M."/>
            <person name="Teasdale R.D."/>
            <person name="Liu E.T."/>
            <person name="Brusic V."/>
            <person name="Quackenbush J."/>
            <person name="Wahlestedt C."/>
            <person name="Mattick J.S."/>
            <person name="Hume D.A."/>
            <person name="Kai C."/>
            <person name="Sasaki D."/>
            <person name="Tomaru Y."/>
            <person name="Fukuda S."/>
            <person name="Kanamori-Katayama M."/>
            <person name="Suzuki M."/>
            <person name="Aoki J."/>
            <person name="Arakawa T."/>
            <person name="Iida J."/>
            <person name="Imamura K."/>
            <person name="Itoh M."/>
            <person name="Kato T."/>
            <person name="Kawaji H."/>
            <person name="Kawagashira N."/>
            <person name="Kawashima T."/>
            <person name="Kojima M."/>
            <person name="Kondo S."/>
            <person name="Konno H."/>
            <person name="Nakano K."/>
            <person name="Ninomiya N."/>
            <person name="Nishio T."/>
            <person name="Okada M."/>
            <person name="Plessy C."/>
            <person name="Shibata K."/>
            <person name="Shiraki T."/>
            <person name="Suzuki S."/>
            <person name="Tagami M."/>
            <person name="Waki K."/>
            <person name="Watahiki A."/>
            <person name="Okamura-Oho Y."/>
            <person name="Suzuki H."/>
            <person name="Kawai J."/>
            <person name="Hayashizaki Y."/>
        </authorList>
    </citation>
    <scope>NUCLEOTIDE SEQUENCE [LARGE SCALE MRNA] (ISOFORMS 1 AND 3)</scope>
    <source>
        <strain>C57BL/6J</strain>
        <tissue>Cerebellum</tissue>
        <tissue>Head</tissue>
    </source>
</reference>
<reference key="2">
    <citation type="journal article" date="2009" name="PLoS Biol.">
        <title>Lineage-specific biology revealed by a finished genome assembly of the mouse.</title>
        <authorList>
            <person name="Church D.M."/>
            <person name="Goodstadt L."/>
            <person name="Hillier L.W."/>
            <person name="Zody M.C."/>
            <person name="Goldstein S."/>
            <person name="She X."/>
            <person name="Bult C.J."/>
            <person name="Agarwala R."/>
            <person name="Cherry J.L."/>
            <person name="DiCuccio M."/>
            <person name="Hlavina W."/>
            <person name="Kapustin Y."/>
            <person name="Meric P."/>
            <person name="Maglott D."/>
            <person name="Birtle Z."/>
            <person name="Marques A.C."/>
            <person name="Graves T."/>
            <person name="Zhou S."/>
            <person name="Teague B."/>
            <person name="Potamousis K."/>
            <person name="Churas C."/>
            <person name="Place M."/>
            <person name="Herschleb J."/>
            <person name="Runnheim R."/>
            <person name="Forrest D."/>
            <person name="Amos-Landgraf J."/>
            <person name="Schwartz D.C."/>
            <person name="Cheng Z."/>
            <person name="Lindblad-Toh K."/>
            <person name="Eichler E.E."/>
            <person name="Ponting C.P."/>
        </authorList>
    </citation>
    <scope>NUCLEOTIDE SEQUENCE [LARGE SCALE GENOMIC DNA]</scope>
    <source>
        <strain>C57BL/6J</strain>
    </source>
</reference>
<reference key="3">
    <citation type="journal article" date="2004" name="Genome Res.">
        <title>The status, quality, and expansion of the NIH full-length cDNA project: the Mammalian Gene Collection (MGC).</title>
        <authorList>
            <consortium name="The MGC Project Team"/>
        </authorList>
    </citation>
    <scope>NUCLEOTIDE SEQUENCE [LARGE SCALE MRNA] (ISOFORM 2)</scope>
    <source>
        <strain>FVB/N</strain>
        <tissue>Mammary tumor</tissue>
    </source>
</reference>
<reference key="4">
    <citation type="journal article" date="2008" name="Am. J. Hum. Genet.">
        <title>Mutations in C2orf37, encoding a nucleolar protein, cause hypogonadism, alopecia, diabetes mellitus, mental retardation, and extrapyramidal syndrome.</title>
        <authorList>
            <person name="Alazami A.M."/>
            <person name="Al-Saif A."/>
            <person name="Al-Semari A."/>
            <person name="Bohlega S."/>
            <person name="Zlitni S."/>
            <person name="Alzahrani F."/>
            <person name="Bavi P."/>
            <person name="Kaya N."/>
            <person name="Colak D."/>
            <person name="Khalak H."/>
            <person name="Baltus A."/>
            <person name="Peterlin B."/>
            <person name="Danda S."/>
            <person name="Bhatia K.P."/>
            <person name="Schneider S.A."/>
            <person name="Sakati N."/>
            <person name="Walsh C.A."/>
            <person name="Al-Mohanna F."/>
            <person name="Meyer B."/>
            <person name="Alkuraya F.S."/>
        </authorList>
    </citation>
    <scope>TISSUE SPECIFICITY</scope>
    <scope>SUBCELLULAR LOCATION</scope>
</reference>
<comment type="function">
    <text evidence="1">May function as a substrate receptor for CUL4-DDB1 E3 ubiquitin-protein ligase complex.</text>
</comment>
<comment type="pathway">
    <text>Protein modification; protein ubiquitination.</text>
</comment>
<comment type="subunit">
    <text evidence="1">Interacts with DDB1, CUL4A and CUL4B.</text>
</comment>
<comment type="subcellular location">
    <subcellularLocation>
        <location evidence="6">Membrane</location>
        <topology evidence="6">Multi-pass membrane protein</topology>
    </subcellularLocation>
    <subcellularLocation>
        <location evidence="3">Nucleus</location>
        <location evidence="3">Nucleolus</location>
    </subcellularLocation>
    <text>According to PubMed:19026396, it is a nucleolar protein, while sequence analysis programs clearly predict 2 transmembrane regions.</text>
</comment>
<comment type="alternative products">
    <event type="alternative splicing"/>
    <isoform>
        <id>Q3TUL7-1</id>
        <name>1</name>
        <sequence type="displayed"/>
    </isoform>
    <isoform>
        <id>Q3TUL7-2</id>
        <name>2</name>
        <sequence type="described" ref="VSP_027789"/>
    </isoform>
    <isoform>
        <id>Q3TUL7-3</id>
        <name>3</name>
        <sequence type="described" ref="VSP_027790 VSP_027791"/>
    </isoform>
</comment>
<comment type="tissue specificity">
    <text evidence="3">Ubiquitously expressed in the embryo, with higher expression in brain, liver and skin tissues.</text>
</comment>
<proteinExistence type="evidence at transcript level"/>
<accession>Q3TUL7</accession>
<accession>A2AUU6</accession>
<accession>Q8C002</accession>
<accession>Q8K0F5</accession>
<organism>
    <name type="scientific">Mus musculus</name>
    <name type="common">Mouse</name>
    <dbReference type="NCBI Taxonomy" id="10090"/>
    <lineage>
        <taxon>Eukaryota</taxon>
        <taxon>Metazoa</taxon>
        <taxon>Chordata</taxon>
        <taxon>Craniata</taxon>
        <taxon>Vertebrata</taxon>
        <taxon>Euteleostomi</taxon>
        <taxon>Mammalia</taxon>
        <taxon>Eutheria</taxon>
        <taxon>Euarchontoglires</taxon>
        <taxon>Glires</taxon>
        <taxon>Rodentia</taxon>
        <taxon>Myomorpha</taxon>
        <taxon>Muroidea</taxon>
        <taxon>Muridae</taxon>
        <taxon>Murinae</taxon>
        <taxon>Mus</taxon>
        <taxon>Mus</taxon>
    </lineage>
</organism>
<dbReference type="EMBL" id="AK032671">
    <property type="protein sequence ID" value="BAC27979.1"/>
    <property type="molecule type" value="mRNA"/>
</dbReference>
<dbReference type="EMBL" id="AK160679">
    <property type="protein sequence ID" value="BAE35954.1"/>
    <property type="molecule type" value="mRNA"/>
</dbReference>
<dbReference type="EMBL" id="AL929228">
    <property type="protein sequence ID" value="CAM22153.1"/>
    <property type="molecule type" value="Genomic_DNA"/>
</dbReference>
<dbReference type="EMBL" id="AL929228">
    <property type="protein sequence ID" value="CAM22154.1"/>
    <property type="molecule type" value="Genomic_DNA"/>
</dbReference>
<dbReference type="EMBL" id="AL929228">
    <property type="protein sequence ID" value="CAM22155.1"/>
    <property type="molecule type" value="Genomic_DNA"/>
</dbReference>
<dbReference type="EMBL" id="BC031546">
    <property type="protein sequence ID" value="AAH31546.1"/>
    <property type="molecule type" value="mRNA"/>
</dbReference>
<dbReference type="CCDS" id="CCDS16111.1">
    <molecule id="Q3TUL7-2"/>
</dbReference>
<dbReference type="CCDS" id="CCDS50601.1">
    <molecule id="Q3TUL7-1"/>
</dbReference>
<dbReference type="CCDS" id="CCDS50602.1">
    <molecule id="Q3TUL7-3"/>
</dbReference>
<dbReference type="RefSeq" id="NP_001159452.1">
    <molecule id="Q3TUL7-1"/>
    <property type="nucleotide sequence ID" value="NM_001165980.1"/>
</dbReference>
<dbReference type="RefSeq" id="NP_001159453.1">
    <molecule id="Q3TUL7-1"/>
    <property type="nucleotide sequence ID" value="NM_001165981.1"/>
</dbReference>
<dbReference type="RefSeq" id="NP_001159454.1">
    <molecule id="Q3TUL7-3"/>
    <property type="nucleotide sequence ID" value="NM_001165982.1"/>
</dbReference>
<dbReference type="RefSeq" id="NP_932122.2">
    <property type="nucleotide sequence ID" value="NM_198005.2"/>
</dbReference>
<dbReference type="RefSeq" id="XP_006500402.1">
    <molecule id="Q3TUL7-1"/>
    <property type="nucleotide sequence ID" value="XM_006500339.5"/>
</dbReference>
<dbReference type="RefSeq" id="XP_036018544.1">
    <molecule id="Q3TUL7-1"/>
    <property type="nucleotide sequence ID" value="XM_036162651.1"/>
</dbReference>
<dbReference type="RefSeq" id="XP_036018545.1">
    <molecule id="Q3TUL7-1"/>
    <property type="nucleotide sequence ID" value="XM_036162652.1"/>
</dbReference>
<dbReference type="BioGRID" id="217721">
    <property type="interactions" value="1"/>
</dbReference>
<dbReference type="FunCoup" id="Q3TUL7">
    <property type="interactions" value="2856"/>
</dbReference>
<dbReference type="STRING" id="10090.ENSMUSP00000120016"/>
<dbReference type="PhosphoSitePlus" id="Q3TUL7"/>
<dbReference type="PaxDb" id="10090-ENSMUSP00000120016"/>
<dbReference type="ProteomicsDB" id="279879">
    <molecule id="Q3TUL7-1"/>
</dbReference>
<dbReference type="ProteomicsDB" id="279880">
    <molecule id="Q3TUL7-2"/>
</dbReference>
<dbReference type="ProteomicsDB" id="279881">
    <molecule id="Q3TUL7-3"/>
</dbReference>
<dbReference type="Antibodypedia" id="65882">
    <property type="antibodies" value="39 antibodies from 14 providers"/>
</dbReference>
<dbReference type="Ensembl" id="ENSMUST00000064141.12">
    <molecule id="Q3TUL7-1"/>
    <property type="protein sequence ID" value="ENSMUSP00000065624.6"/>
    <property type="gene ID" value="ENSMUSG00000041966.19"/>
</dbReference>
<dbReference type="Ensembl" id="ENSMUST00000112159.9">
    <molecule id="Q3TUL7-3"/>
    <property type="protein sequence ID" value="ENSMUSP00000107785.3"/>
    <property type="gene ID" value="ENSMUSG00000041966.19"/>
</dbReference>
<dbReference type="Ensembl" id="ENSMUST00000154704.8">
    <molecule id="Q3TUL7-1"/>
    <property type="protein sequence ID" value="ENSMUSP00000120016.2"/>
    <property type="gene ID" value="ENSMUSG00000041966.19"/>
</dbReference>
<dbReference type="GeneID" id="75763"/>
<dbReference type="KEGG" id="mmu:75763"/>
<dbReference type="UCSC" id="uc008kab.2">
    <molecule id="Q3TUL7-3"/>
    <property type="organism name" value="mouse"/>
</dbReference>
<dbReference type="UCSC" id="uc008kad.2">
    <molecule id="Q3TUL7-1"/>
    <property type="organism name" value="mouse"/>
</dbReference>
<dbReference type="AGR" id="MGI:1923013"/>
<dbReference type="CTD" id="80067"/>
<dbReference type="MGI" id="MGI:1923013">
    <property type="gene designation" value="Dcaf17"/>
</dbReference>
<dbReference type="VEuPathDB" id="HostDB:ENSMUSG00000041966"/>
<dbReference type="eggNOG" id="ENOG502QQ41">
    <property type="taxonomic scope" value="Eukaryota"/>
</dbReference>
<dbReference type="GeneTree" id="ENSGT00390000012728"/>
<dbReference type="HOGENOM" id="CLU_604033_0_0_1"/>
<dbReference type="InParanoid" id="Q3TUL7"/>
<dbReference type="OMA" id="IQEMNCC"/>
<dbReference type="OrthoDB" id="9971789at2759"/>
<dbReference type="PhylomeDB" id="Q3TUL7"/>
<dbReference type="TreeFam" id="TF328801"/>
<dbReference type="Reactome" id="R-MMU-8951664">
    <property type="pathway name" value="Neddylation"/>
</dbReference>
<dbReference type="UniPathway" id="UPA00143"/>
<dbReference type="BioGRID-ORCS" id="75763">
    <property type="hits" value="2 hits in 76 CRISPR screens"/>
</dbReference>
<dbReference type="ChiTaRS" id="Dcaf17">
    <property type="organism name" value="mouse"/>
</dbReference>
<dbReference type="PRO" id="PR:Q3TUL7"/>
<dbReference type="Proteomes" id="UP000000589">
    <property type="component" value="Chromosome 2"/>
</dbReference>
<dbReference type="RNAct" id="Q3TUL7">
    <property type="molecule type" value="protein"/>
</dbReference>
<dbReference type="Bgee" id="ENSMUSG00000041966">
    <property type="expression patterns" value="Expressed in ear vesicle and 249 other cell types or tissues"/>
</dbReference>
<dbReference type="ExpressionAtlas" id="Q3TUL7">
    <property type="expression patterns" value="baseline and differential"/>
</dbReference>
<dbReference type="GO" id="GO:0080008">
    <property type="term" value="C:Cul4-RING E3 ubiquitin ligase complex"/>
    <property type="evidence" value="ECO:0000250"/>
    <property type="project" value="UniProtKB"/>
</dbReference>
<dbReference type="GO" id="GO:0005829">
    <property type="term" value="C:cytosol"/>
    <property type="evidence" value="ECO:0007669"/>
    <property type="project" value="Ensembl"/>
</dbReference>
<dbReference type="GO" id="GO:0016020">
    <property type="term" value="C:membrane"/>
    <property type="evidence" value="ECO:0007669"/>
    <property type="project" value="UniProtKB-SubCell"/>
</dbReference>
<dbReference type="GO" id="GO:0005730">
    <property type="term" value="C:nucleolus"/>
    <property type="evidence" value="ECO:0007669"/>
    <property type="project" value="UniProtKB-SubCell"/>
</dbReference>
<dbReference type="GO" id="GO:0005654">
    <property type="term" value="C:nucleoplasm"/>
    <property type="evidence" value="ECO:0007669"/>
    <property type="project" value="Ensembl"/>
</dbReference>
<dbReference type="GO" id="GO:0001675">
    <property type="term" value="P:acrosome assembly"/>
    <property type="evidence" value="ECO:0000315"/>
    <property type="project" value="MGI"/>
</dbReference>
<dbReference type="GO" id="GO:0000902">
    <property type="term" value="P:cell morphogenesis"/>
    <property type="evidence" value="ECO:0000315"/>
    <property type="project" value="MGI"/>
</dbReference>
<dbReference type="GO" id="GO:0016567">
    <property type="term" value="P:protein ubiquitination"/>
    <property type="evidence" value="ECO:0007669"/>
    <property type="project" value="UniProtKB-UniPathway"/>
</dbReference>
<dbReference type="GO" id="GO:0007283">
    <property type="term" value="P:spermatogenesis"/>
    <property type="evidence" value="ECO:0000315"/>
    <property type="project" value="MGI"/>
</dbReference>
<dbReference type="InterPro" id="IPR031620">
    <property type="entry name" value="DCAF17"/>
</dbReference>
<dbReference type="PANTHER" id="PTHR14815">
    <property type="entry name" value="DDB1- AND CUL4-ASSOCIATED FACTOR 17"/>
    <property type="match status" value="1"/>
</dbReference>
<dbReference type="PANTHER" id="PTHR14815:SF2">
    <property type="entry name" value="DDB1- AND CUL4-ASSOCIATED FACTOR 17"/>
    <property type="match status" value="1"/>
</dbReference>
<dbReference type="Pfam" id="PF15802">
    <property type="entry name" value="DCAF17"/>
    <property type="match status" value="1"/>
</dbReference>
<gene>
    <name type="primary">Dcaf17</name>
</gene>
<protein>
    <recommendedName>
        <fullName>DDB1- and CUL4-associated factor 17</fullName>
    </recommendedName>
</protein>
<evidence type="ECO:0000250" key="1"/>
<evidence type="ECO:0000255" key="2"/>
<evidence type="ECO:0000269" key="3">
    <source>
    </source>
</evidence>
<evidence type="ECO:0000303" key="4">
    <source>
    </source>
</evidence>
<evidence type="ECO:0000303" key="5">
    <source>
    </source>
</evidence>
<evidence type="ECO:0000305" key="6"/>
<feature type="chain" id="PRO_0000300119" description="DDB1- and CUL4-associated factor 17">
    <location>
        <begin position="1"/>
        <end position="519"/>
    </location>
</feature>
<feature type="transmembrane region" description="Helical" evidence="2">
    <location>
        <begin position="186"/>
        <end position="206"/>
    </location>
</feature>
<feature type="transmembrane region" description="Helical" evidence="2">
    <location>
        <begin position="222"/>
        <end position="242"/>
    </location>
</feature>
<feature type="splice variant" id="VSP_027790" description="In isoform 3." evidence="5">
    <original>FMQQKLDLGCACSQGGTTGTVGEAPFGIPCNVKITDSPPPLF</original>
    <variation>THHLHSLKFHLWRTHSRLEAILGTTSSRLIRRNRKEFFIFVP</variation>
    <location>
        <begin position="245"/>
        <end position="286"/>
    </location>
</feature>
<feature type="splice variant" id="VSP_027791" description="In isoform 3." evidence="5">
    <location>
        <begin position="287"/>
        <end position="519"/>
    </location>
</feature>
<feature type="splice variant" id="VSP_027789" description="In isoform 2." evidence="4">
    <original>TYSHEVYFDRDLVLHIEQKPNRVFSCYVYQMVCDPGEEEEAVNRSG</original>
    <variation>VCIMSGTLSCKGFLYRCHLLDHVHISPDSPVL</variation>
    <location>
        <begin position="474"/>
        <end position="519"/>
    </location>
</feature>
<feature type="sequence conflict" description="In Ref. 2; CAM22154." evidence="6" ref="2">
    <original>M</original>
    <variation>T</variation>
    <location sequence="Q3TUL7-2">
        <position position="477"/>
    </location>
</feature>
<feature type="sequence conflict" description="In Ref. 2; CAM22154." evidence="6" ref="2">
    <original>V</original>
    <variation>M</variation>
    <location sequence="Q3TUL7-2">
        <position position="504"/>
    </location>
</feature>